<feature type="chain" id="PRO_0000346494" description="PKHD-type hydroxylase Nham_1514">
    <location>
        <begin position="1"/>
        <end position="229"/>
    </location>
</feature>
<feature type="domain" description="Fe2OG dioxygenase" evidence="1">
    <location>
        <begin position="78"/>
        <end position="180"/>
    </location>
</feature>
<feature type="binding site" evidence="1">
    <location>
        <position position="98"/>
    </location>
    <ligand>
        <name>Fe cation</name>
        <dbReference type="ChEBI" id="CHEBI:24875"/>
    </ligand>
</feature>
<feature type="binding site" evidence="1">
    <location>
        <position position="100"/>
    </location>
    <ligand>
        <name>Fe cation</name>
        <dbReference type="ChEBI" id="CHEBI:24875"/>
    </ligand>
</feature>
<feature type="binding site" evidence="1">
    <location>
        <position position="161"/>
    </location>
    <ligand>
        <name>Fe cation</name>
        <dbReference type="ChEBI" id="CHEBI:24875"/>
    </ligand>
</feature>
<feature type="binding site" evidence="1">
    <location>
        <position position="171"/>
    </location>
    <ligand>
        <name>2-oxoglutarate</name>
        <dbReference type="ChEBI" id="CHEBI:16810"/>
    </ligand>
</feature>
<proteinExistence type="inferred from homology"/>
<keyword id="KW-0223">Dioxygenase</keyword>
<keyword id="KW-0408">Iron</keyword>
<keyword id="KW-0479">Metal-binding</keyword>
<keyword id="KW-0560">Oxidoreductase</keyword>
<keyword id="KW-1185">Reference proteome</keyword>
<keyword id="KW-0847">Vitamin C</keyword>
<accession>Q1QN61</accession>
<gene>
    <name type="ordered locus">Nham_1514</name>
</gene>
<comment type="cofactor">
    <cofactor evidence="1">
        <name>Fe(2+)</name>
        <dbReference type="ChEBI" id="CHEBI:29033"/>
    </cofactor>
    <text evidence="1">Binds 1 Fe(2+) ion per subunit.</text>
</comment>
<comment type="cofactor">
    <cofactor evidence="1">
        <name>L-ascorbate</name>
        <dbReference type="ChEBI" id="CHEBI:38290"/>
    </cofactor>
</comment>
<dbReference type="EC" id="1.14.11.-" evidence="1"/>
<dbReference type="EMBL" id="CP000319">
    <property type="protein sequence ID" value="ABE62336.1"/>
    <property type="molecule type" value="Genomic_DNA"/>
</dbReference>
<dbReference type="RefSeq" id="WP_011510025.1">
    <property type="nucleotide sequence ID" value="NC_007964.1"/>
</dbReference>
<dbReference type="SMR" id="Q1QN61"/>
<dbReference type="STRING" id="323097.Nham_1514"/>
<dbReference type="KEGG" id="nha:Nham_1514"/>
<dbReference type="eggNOG" id="COG3128">
    <property type="taxonomic scope" value="Bacteria"/>
</dbReference>
<dbReference type="HOGENOM" id="CLU_106663_0_0_5"/>
<dbReference type="OrthoDB" id="9812472at2"/>
<dbReference type="Proteomes" id="UP000001953">
    <property type="component" value="Chromosome"/>
</dbReference>
<dbReference type="GO" id="GO:0016706">
    <property type="term" value="F:2-oxoglutarate-dependent dioxygenase activity"/>
    <property type="evidence" value="ECO:0007669"/>
    <property type="project" value="UniProtKB-UniRule"/>
</dbReference>
<dbReference type="GO" id="GO:0005506">
    <property type="term" value="F:iron ion binding"/>
    <property type="evidence" value="ECO:0007669"/>
    <property type="project" value="UniProtKB-UniRule"/>
</dbReference>
<dbReference type="GO" id="GO:0031418">
    <property type="term" value="F:L-ascorbic acid binding"/>
    <property type="evidence" value="ECO:0007669"/>
    <property type="project" value="UniProtKB-KW"/>
</dbReference>
<dbReference type="GO" id="GO:0006974">
    <property type="term" value="P:DNA damage response"/>
    <property type="evidence" value="ECO:0007669"/>
    <property type="project" value="TreeGrafter"/>
</dbReference>
<dbReference type="GO" id="GO:0006879">
    <property type="term" value="P:intracellular iron ion homeostasis"/>
    <property type="evidence" value="ECO:0007669"/>
    <property type="project" value="TreeGrafter"/>
</dbReference>
<dbReference type="Gene3D" id="2.60.120.620">
    <property type="entry name" value="q2cbj1_9rhob like domain"/>
    <property type="match status" value="1"/>
</dbReference>
<dbReference type="Gene3D" id="4.10.860.20">
    <property type="entry name" value="Rabenosyn, Rab binding domain"/>
    <property type="match status" value="1"/>
</dbReference>
<dbReference type="HAMAP" id="MF_00657">
    <property type="entry name" value="Hydroxyl_YbiX"/>
    <property type="match status" value="1"/>
</dbReference>
<dbReference type="InterPro" id="IPR005123">
    <property type="entry name" value="Oxoglu/Fe-dep_dioxygenase_dom"/>
</dbReference>
<dbReference type="InterPro" id="IPR041097">
    <property type="entry name" value="PKHD_C"/>
</dbReference>
<dbReference type="InterPro" id="IPR023550">
    <property type="entry name" value="PKHD_hydroxylase"/>
</dbReference>
<dbReference type="InterPro" id="IPR006620">
    <property type="entry name" value="Pro_4_hyd_alph"/>
</dbReference>
<dbReference type="InterPro" id="IPR044862">
    <property type="entry name" value="Pro_4_hyd_alph_FE2OG_OXY"/>
</dbReference>
<dbReference type="NCBIfam" id="NF003973">
    <property type="entry name" value="PRK05467.1-2"/>
    <property type="match status" value="1"/>
</dbReference>
<dbReference type="NCBIfam" id="NF003974">
    <property type="entry name" value="PRK05467.1-3"/>
    <property type="match status" value="1"/>
</dbReference>
<dbReference type="NCBIfam" id="NF003975">
    <property type="entry name" value="PRK05467.1-4"/>
    <property type="match status" value="1"/>
</dbReference>
<dbReference type="PANTHER" id="PTHR41536">
    <property type="entry name" value="PKHD-TYPE HYDROXYLASE YBIX"/>
    <property type="match status" value="1"/>
</dbReference>
<dbReference type="PANTHER" id="PTHR41536:SF1">
    <property type="entry name" value="PKHD-TYPE HYDROXYLASE YBIX"/>
    <property type="match status" value="1"/>
</dbReference>
<dbReference type="Pfam" id="PF13640">
    <property type="entry name" value="2OG-FeII_Oxy_3"/>
    <property type="match status" value="1"/>
</dbReference>
<dbReference type="Pfam" id="PF18331">
    <property type="entry name" value="PKHD_C"/>
    <property type="match status" value="1"/>
</dbReference>
<dbReference type="SMART" id="SM00702">
    <property type="entry name" value="P4Hc"/>
    <property type="match status" value="1"/>
</dbReference>
<dbReference type="SUPFAM" id="SSF51197">
    <property type="entry name" value="Clavaminate synthase-like"/>
    <property type="match status" value="1"/>
</dbReference>
<dbReference type="PROSITE" id="PS51471">
    <property type="entry name" value="FE2OG_OXY"/>
    <property type="match status" value="1"/>
</dbReference>
<organism>
    <name type="scientific">Nitrobacter hamburgensis (strain DSM 10229 / NCIMB 13809 / X14)</name>
    <dbReference type="NCBI Taxonomy" id="323097"/>
    <lineage>
        <taxon>Bacteria</taxon>
        <taxon>Pseudomonadati</taxon>
        <taxon>Pseudomonadota</taxon>
        <taxon>Alphaproteobacteria</taxon>
        <taxon>Hyphomicrobiales</taxon>
        <taxon>Nitrobacteraceae</taxon>
        <taxon>Nitrobacter</taxon>
    </lineage>
</organism>
<protein>
    <recommendedName>
        <fullName evidence="1">PKHD-type hydroxylase Nham_1514</fullName>
        <ecNumber evidence="1">1.14.11.-</ecNumber>
    </recommendedName>
</protein>
<evidence type="ECO:0000255" key="1">
    <source>
        <dbReference type="HAMAP-Rule" id="MF_00657"/>
    </source>
</evidence>
<sequence>MLTCVPGVLEKDDVADFRRIMDAAEWEDGRSTAGAQSALVKRNEQLPPDGDLARTLGNRIISALTANPRFISAAIPLQIFPPLFNRYVASDGHHFGVHVDNAVRGDRMTGLRIRTDLSVTLFLSEPDDYDGGDLVVEDNYGSHEVKLPAGDLVLYPASSLHLVTPVTRGTRVASFFWLQSMVRDDHARSMIFDLDTAIQSLVERLGRDDPETVKLTGIYHNLIRYWAEV</sequence>
<name>Y1514_NITHX</name>
<reference key="1">
    <citation type="submission" date="2006-03" db="EMBL/GenBank/DDBJ databases">
        <title>Complete sequence of chromosome of Nitrobacter hamburgensis X14.</title>
        <authorList>
            <consortium name="US DOE Joint Genome Institute"/>
            <person name="Copeland A."/>
            <person name="Lucas S."/>
            <person name="Lapidus A."/>
            <person name="Barry K."/>
            <person name="Detter J.C."/>
            <person name="Glavina del Rio T."/>
            <person name="Hammon N."/>
            <person name="Israni S."/>
            <person name="Dalin E."/>
            <person name="Tice H."/>
            <person name="Pitluck S."/>
            <person name="Chain P."/>
            <person name="Malfatti S."/>
            <person name="Shin M."/>
            <person name="Vergez L."/>
            <person name="Schmutz J."/>
            <person name="Larimer F."/>
            <person name="Land M."/>
            <person name="Hauser L."/>
            <person name="Kyrpides N."/>
            <person name="Ivanova N."/>
            <person name="Ward B."/>
            <person name="Arp D."/>
            <person name="Klotz M."/>
            <person name="Stein L."/>
            <person name="O'Mullan G."/>
            <person name="Starkenburg S."/>
            <person name="Sayavedra L."/>
            <person name="Poret-Peterson A.T."/>
            <person name="Gentry M.E."/>
            <person name="Bruce D."/>
            <person name="Richardson P."/>
        </authorList>
    </citation>
    <scope>NUCLEOTIDE SEQUENCE [LARGE SCALE GENOMIC DNA]</scope>
    <source>
        <strain>DSM 10229 / NCIMB 13809 / X14</strain>
    </source>
</reference>